<evidence type="ECO:0000250" key="1">
    <source>
        <dbReference type="UniProtKB" id="Q9UBN7"/>
    </source>
</evidence>
<evidence type="ECO:0000250" key="2">
    <source>
        <dbReference type="UniProtKB" id="Q9Z2V5"/>
    </source>
</evidence>
<evidence type="ECO:0000255" key="3">
    <source>
        <dbReference type="PROSITE-ProRule" id="PRU00502"/>
    </source>
</evidence>
<evidence type="ECO:0000256" key="4">
    <source>
        <dbReference type="SAM" id="MobiDB-lite"/>
    </source>
</evidence>
<evidence type="ECO:0000269" key="5">
    <source>
    </source>
</evidence>
<evidence type="ECO:0000305" key="6"/>
<evidence type="ECO:0000312" key="7">
    <source>
        <dbReference type="Proteomes" id="UP000002494"/>
    </source>
</evidence>
<evidence type="ECO:0000312" key="8">
    <source>
        <dbReference type="RGD" id="619981"/>
    </source>
</evidence>
<feature type="chain" id="PRO_0000462176" description="Protein deacetylase HDAC6">
    <location>
        <begin position="1"/>
        <end position="1183"/>
    </location>
</feature>
<feature type="zinc finger region" description="UBP-type" evidence="3">
    <location>
        <begin position="1079"/>
        <end position="1177"/>
    </location>
</feature>
<feature type="region of interest" description="Disordered" evidence="4">
    <location>
        <begin position="1"/>
        <end position="61"/>
    </location>
</feature>
<feature type="region of interest" description="Histone deacetylase 1" evidence="6">
    <location>
        <begin position="86"/>
        <end position="434"/>
    </location>
</feature>
<feature type="region of interest" description="Histone deacetylase 2" evidence="6">
    <location>
        <begin position="512"/>
        <end position="830"/>
    </location>
</feature>
<feature type="region of interest" description="Disordered" evidence="4">
    <location>
        <begin position="972"/>
        <end position="1042"/>
    </location>
</feature>
<feature type="region of interest" description="Ubiquitin binding" evidence="1">
    <location>
        <begin position="1122"/>
        <end position="1124"/>
    </location>
</feature>
<feature type="region of interest" description="Ubiquitin binding" evidence="1">
    <location>
        <begin position="1150"/>
        <end position="1157"/>
    </location>
</feature>
<feature type="short sequence motif" description="Nuclear export signal" evidence="2">
    <location>
        <begin position="66"/>
        <end position="75"/>
    </location>
</feature>
<feature type="compositionally biased region" description="Polar residues" evidence="4">
    <location>
        <begin position="18"/>
        <end position="29"/>
    </location>
</feature>
<feature type="compositionally biased region" description="Low complexity" evidence="4">
    <location>
        <begin position="980"/>
        <end position="996"/>
    </location>
</feature>
<feature type="compositionally biased region" description="Polar residues" evidence="4">
    <location>
        <begin position="997"/>
        <end position="1008"/>
    </location>
</feature>
<feature type="compositionally biased region" description="Low complexity" evidence="4">
    <location>
        <begin position="1021"/>
        <end position="1035"/>
    </location>
</feature>
<feature type="active site" description="1" evidence="1">
    <location>
        <position position="215"/>
    </location>
</feature>
<feature type="active site" description="2" evidence="1">
    <location>
        <position position="641"/>
    </location>
</feature>
<feature type="binding site" evidence="3">
    <location>
        <position position="1081"/>
    </location>
    <ligand>
        <name>Zn(2+)</name>
        <dbReference type="ChEBI" id="CHEBI:29105"/>
        <label>1</label>
    </ligand>
</feature>
<feature type="binding site" evidence="3">
    <location>
        <position position="1083"/>
    </location>
    <ligand>
        <name>Zn(2+)</name>
        <dbReference type="ChEBI" id="CHEBI:29105"/>
        <label>1</label>
    </ligand>
</feature>
<feature type="binding site" evidence="3">
    <location>
        <position position="1101"/>
    </location>
    <ligand>
        <name>Zn(2+)</name>
        <dbReference type="ChEBI" id="CHEBI:29105"/>
        <label>2</label>
    </ligand>
</feature>
<feature type="binding site" evidence="3">
    <location>
        <position position="1104"/>
    </location>
    <ligand>
        <name>Zn(2+)</name>
        <dbReference type="ChEBI" id="CHEBI:29105"/>
        <label>2</label>
    </ligand>
</feature>
<feature type="binding site" evidence="3">
    <location>
        <position position="1113"/>
    </location>
    <ligand>
        <name>Zn(2+)</name>
        <dbReference type="ChEBI" id="CHEBI:29105"/>
        <label>3</label>
    </ligand>
</feature>
<feature type="binding site" evidence="3">
    <location>
        <position position="1116"/>
    </location>
    <ligand>
        <name>Zn(2+)</name>
        <dbReference type="ChEBI" id="CHEBI:29105"/>
        <label>3</label>
    </ligand>
</feature>
<feature type="binding site" evidence="3">
    <location>
        <position position="1121"/>
    </location>
    <ligand>
        <name>Zn(2+)</name>
        <dbReference type="ChEBI" id="CHEBI:29105"/>
        <label>2</label>
    </ligand>
</feature>
<feature type="binding site" evidence="3">
    <location>
        <position position="1128"/>
    </location>
    <ligand>
        <name>Zn(2+)</name>
        <dbReference type="ChEBI" id="CHEBI:29105"/>
        <label>2</label>
    </ligand>
</feature>
<feature type="binding site" evidence="3">
    <location>
        <position position="1132"/>
    </location>
    <ligand>
        <name>Zn(2+)</name>
        <dbReference type="ChEBI" id="CHEBI:29105"/>
        <label>3</label>
    </ligand>
</feature>
<feature type="binding site" evidence="3">
    <location>
        <position position="1138"/>
    </location>
    <ligand>
        <name>Zn(2+)</name>
        <dbReference type="ChEBI" id="CHEBI:29105"/>
        <label>3</label>
    </ligand>
</feature>
<feature type="binding site" evidence="3">
    <location>
        <position position="1151"/>
    </location>
    <ligand>
        <name>Zn(2+)</name>
        <dbReference type="ChEBI" id="CHEBI:29105"/>
        <label>1</label>
    </ligand>
</feature>
<feature type="binding site" evidence="3">
    <location>
        <position position="1154"/>
    </location>
    <ligand>
        <name>Zn(2+)</name>
        <dbReference type="ChEBI" id="CHEBI:29105"/>
        <label>1</label>
    </ligand>
</feature>
<feature type="modified residue" description="Phosphoserine" evidence="1">
    <location>
        <position position="21"/>
    </location>
</feature>
<feature type="modified residue" description="Omega-N-methylarginine" evidence="2">
    <location>
        <position position="32"/>
    </location>
</feature>
<feature type="modified residue" description="Phosphothreonine" evidence="1">
    <location>
        <position position="990"/>
    </location>
</feature>
<feature type="modified residue" description="Phosphothreonine" evidence="1">
    <location>
        <position position="995"/>
    </location>
</feature>
<feature type="modified residue" description="Phosphothreonine" evidence="1">
    <location>
        <position position="1005"/>
    </location>
</feature>
<feature type="modified residue" description="Phosphoserine" evidence="1">
    <location>
        <position position="1009"/>
    </location>
</feature>
<comment type="function">
    <text evidence="1 2 5">Deacetylates a wide range of non-histone substrates (By similarity). Plays a central role in microtubule-dependent cell motility by mediating deacetylation of tubulin (By similarity). Required for cilia disassembly via deacetylation of alpha-tubulin (By similarity). Alpha-tubulin deacetylation results in destabilization of dynamic microtubules (By similarity). Promotes deacetylation of CTTN, leading to actin polymerization, promotion of autophagosome-lysosome fusion and completion of autophagy (By similarity). Deacetylates SQSTM1. Deacetylates peroxiredoxins PRDX1 and PRDX2, decreasing their reducing activity (By similarity). Deacetylates antiviral protein RIGI in the presence of viral mRNAs which is required for viral RNA detection by RIGI (By similarity). Sequentially deacetylates and polyubiquitinates DNA mismatch repair protein MSH2 which leads to MSH2 degradation, reducing cellular sensitivity to DNA-damaging agents and decreasing cellular DNA mismatch repair activities (By similarity). Deacetylates DNA mismatch repair protein MLH1 which prevents recruitment of the MutL alpha complex (formed by the MLH1-PMS2 heterodimer) to the MutS alpha complex (formed by the MSH2-MSH6 heterodimer), leading to tolerance of DNA damage (By similarity). Deacetylates RHOT1/MIRO1 which blocks mitochondrial transport and mediates axon growth inhibition (PubMed:31068376). Deacetylates transcription factor SP1 which leads to increased expression of ENG, positively regulating angiogenesis (By similarity). Deacetylates KHDRBS1/SAM68 which regulates alternative splicing by inhibiting the inclusion of CD44 alternate exons (By similarity). Promotes odontoblast differentiation following IPO7-mediated nuclear import and subsequent repression of RUNX2 expression (By similarity). In addition to its protein deacetylase activity, plays a key role in the degradation of misfolded proteins: when misfolded proteins are too abundant to be degraded by the chaperone refolding system and the ubiquitin-proteasome, mediates the transport of misfolded proteins to a cytoplasmic juxtanuclear structure called aggresome (By similarity). Probably acts as an adapter that recognizes polyubiquitinated misfolded proteins and targets them to the aggresome, facilitating their clearance by autophagy (By similarity).</text>
</comment>
<comment type="catalytic activity">
    <reaction evidence="1">
        <text>N(6)-acetyl-L-lysyl-[protein] + H2O = L-lysyl-[protein] + acetate</text>
        <dbReference type="Rhea" id="RHEA:58108"/>
        <dbReference type="Rhea" id="RHEA-COMP:9752"/>
        <dbReference type="Rhea" id="RHEA-COMP:10731"/>
        <dbReference type="ChEBI" id="CHEBI:15377"/>
        <dbReference type="ChEBI" id="CHEBI:29969"/>
        <dbReference type="ChEBI" id="CHEBI:30089"/>
        <dbReference type="ChEBI" id="CHEBI:61930"/>
    </reaction>
    <physiologicalReaction direction="left-to-right" evidence="1">
        <dbReference type="Rhea" id="RHEA:58109"/>
    </physiologicalReaction>
</comment>
<comment type="catalytic activity">
    <reaction evidence="1">
        <text>N(6)-acetyl-L-lysyl-[alpha-tubulin] + H2O = L-lysyl-[alpha-tubulin] + acetate</text>
        <dbReference type="Rhea" id="RHEA:21548"/>
        <dbReference type="Rhea" id="RHEA-COMP:11278"/>
        <dbReference type="Rhea" id="RHEA-COMP:11279"/>
        <dbReference type="ChEBI" id="CHEBI:15377"/>
        <dbReference type="ChEBI" id="CHEBI:29969"/>
        <dbReference type="ChEBI" id="CHEBI:30089"/>
        <dbReference type="ChEBI" id="CHEBI:61930"/>
    </reaction>
    <physiologicalReaction direction="left-to-right" evidence="1">
        <dbReference type="Rhea" id="RHEA:21549"/>
    </physiologicalReaction>
</comment>
<comment type="cofactor">
    <cofactor evidence="1">
        <name>Zn(2+)</name>
        <dbReference type="ChEBI" id="CHEBI:29105"/>
    </cofactor>
    <text evidence="1">Binds 3 Zn(2+) ions per subunit.</text>
</comment>
<comment type="pathway">
    <text evidence="1">Protein modification; protein ubiquitination.</text>
</comment>
<comment type="subunit">
    <text evidence="1 2">Forms a trimeric complex in the nucleus consisting of BANP, HDAC6 and KHDRBS1/SAM68; HDAC6 keeps KHDRBS1 in a deacetylated state which inhibits the inclusion of CD44 alternate exons (By similarity). The complex is disrupted by MAPK1/MAPK3-mediated phosphorylation of BANP which results in BANP export to the cytoplasm (By similarity). This facilitates acetylation of KHDRBS1 and CD44 variant exon inclusion (By similarity). Interacts with SIRT2 (via both phosphorylated, unphosphorylated, active or inactive forms); the interaction is necessary for the complex to interact with alpha-tubulin. Under proteasome impairment conditions, interacts with UBD via its histone deacetylase 1 and UBP-type zinc-finger regions. Interacts with BBIP1, CBFA2T3, CYLD, DDIT3/CHOP, ZMYND15, F-actin and HDAC11. Interacts with RIPOR2; this interaction occurs during early myogenic differentiation and prevents HDAC6 to deacetylate tubulin. Interacts with AURKA; AURKA-mediated phosphorylation of HDAC6 promotes deacetylation of alpha-tubulin. Interacts with DYSF; this interaction occurs during early myogenic differentiation. Interacts with TPPP; inhibiting the tubulin deacetylase activity of HDAC6. Interacts with DYNLL1. Interacts with ATP13A2; the interaction results in recruitment of HDAC6 to lysosomes to promote CTTN deacetylation. Interacts with CCDC141 (via the N-terminal region); inhibiting the deacetylase activity of HDAC6. Interacts with IPO7; the interaction facilitates HDAC6 nuclear translocation in dental papilla cells.</text>
</comment>
<comment type="subcellular location">
    <subcellularLocation>
        <location evidence="1">Cytoplasm</location>
    </subcellularLocation>
    <subcellularLocation>
        <location evidence="1">Cytoplasm</location>
        <location evidence="1">Cytoskeleton</location>
    </subcellularLocation>
    <subcellularLocation>
        <location evidence="1">Nucleus</location>
    </subcellularLocation>
    <subcellularLocation>
        <location evidence="2">Perikaryon</location>
    </subcellularLocation>
    <subcellularLocation>
        <location evidence="2">Cell projection</location>
        <location evidence="2">Dendrite</location>
    </subcellularLocation>
    <subcellularLocation>
        <location evidence="2">Cell projection</location>
        <location evidence="2">Axon</location>
    </subcellularLocation>
    <subcellularLocation>
        <location evidence="1">Cell projection</location>
        <location evidence="1">Cilium</location>
    </subcellularLocation>
    <subcellularLocation>
        <location evidence="1">Cytoplasm</location>
        <location evidence="1">Cytoskeleton</location>
        <location evidence="1">Microtubule organizing center</location>
        <location evidence="1">Centrosome</location>
    </subcellularLocation>
    <subcellularLocation>
        <location evidence="1">Cytoplasm</location>
        <location evidence="1">Cytoskeleton</location>
        <location evidence="1">Cilium basal body</location>
    </subcellularLocation>
    <text evidence="1 2">Mainly cytoplasmic where it is associated with microtubules (By similarity). Can shuttle between the cytoplasm and the nucleus. Found exclusively in the cytoplasm in proliferative cells with a fraction found in the nucleus during differentiation (By similarity). May translocate to the nucleus following DNA damage (By similarity).</text>
</comment>
<comment type="domain">
    <text evidence="1">Histone deacetylase domain 1 mediates the E3 ubiquitin-protein ligase activity.</text>
</comment>
<comment type="PTM">
    <text evidence="1">Phosphorylated by AURKA; phosphorylation increases HDAC6-mediated deacetylation of alpha-tubulin and subsequent disassembly of cilia.</text>
</comment>
<comment type="PTM">
    <text evidence="1">Ubiquitinated. Its polyubiquitination however does not lead to its degradation.</text>
</comment>
<comment type="PTM">
    <text evidence="1">Sumoylated in vitro.</text>
</comment>
<comment type="similarity">
    <text evidence="6">Belongs to the histone deacetylase family. HD type 2 subfamily.</text>
</comment>
<comment type="caution">
    <text evidence="1">Was originally thought to be a histone deacetylase. However, subsequent work has shown that it is predominantly cytoplasmic and deacetylates a range of non-histone substrates.</text>
</comment>
<dbReference type="EC" id="3.5.1.-" evidence="1"/>
<dbReference type="EC" id="2.3.2.-" evidence="1"/>
<dbReference type="Ensembl" id="ENSRNOT00000116471.1">
    <property type="protein sequence ID" value="ENSRNOP00000096671.1"/>
    <property type="gene ID" value="ENSRNOG00000048738.3"/>
</dbReference>
<dbReference type="AGR" id="RGD:619981"/>
<dbReference type="RGD" id="619981">
    <property type="gene designation" value="Hdac6"/>
</dbReference>
<dbReference type="GeneTree" id="ENSGT00940000159563"/>
<dbReference type="UniPathway" id="UPA00143"/>
<dbReference type="Proteomes" id="UP000002494">
    <property type="component" value="Chromosome X"/>
</dbReference>
<dbReference type="GO" id="GO:0016235">
    <property type="term" value="C:aggresome"/>
    <property type="evidence" value="ECO:0000266"/>
    <property type="project" value="RGD"/>
</dbReference>
<dbReference type="GO" id="GO:0030424">
    <property type="term" value="C:axon"/>
    <property type="evidence" value="ECO:0000314"/>
    <property type="project" value="RGD"/>
</dbReference>
<dbReference type="GO" id="GO:1904115">
    <property type="term" value="C:axon cytoplasm"/>
    <property type="evidence" value="ECO:0007669"/>
    <property type="project" value="GOC"/>
</dbReference>
<dbReference type="GO" id="GO:0005901">
    <property type="term" value="C:caveola"/>
    <property type="evidence" value="ECO:0000266"/>
    <property type="project" value="RGD"/>
</dbReference>
<dbReference type="GO" id="GO:0031252">
    <property type="term" value="C:cell leading edge"/>
    <property type="evidence" value="ECO:0000266"/>
    <property type="project" value="RGD"/>
</dbReference>
<dbReference type="GO" id="GO:0005813">
    <property type="term" value="C:centrosome"/>
    <property type="evidence" value="ECO:0000314"/>
    <property type="project" value="RGD"/>
</dbReference>
<dbReference type="GO" id="GO:0036064">
    <property type="term" value="C:ciliary basal body"/>
    <property type="evidence" value="ECO:0000266"/>
    <property type="project" value="RGD"/>
</dbReference>
<dbReference type="GO" id="GO:0005737">
    <property type="term" value="C:cytoplasm"/>
    <property type="evidence" value="ECO:0000266"/>
    <property type="project" value="RGD"/>
</dbReference>
<dbReference type="GO" id="GO:0005829">
    <property type="term" value="C:cytosol"/>
    <property type="evidence" value="ECO:0000266"/>
    <property type="project" value="RGD"/>
</dbReference>
<dbReference type="GO" id="GO:0030425">
    <property type="term" value="C:dendrite"/>
    <property type="evidence" value="ECO:0000266"/>
    <property type="project" value="RGD"/>
</dbReference>
<dbReference type="GO" id="GO:0000118">
    <property type="term" value="C:histone deacetylase complex"/>
    <property type="evidence" value="ECO:0000266"/>
    <property type="project" value="RGD"/>
</dbReference>
<dbReference type="GO" id="GO:0016234">
    <property type="term" value="C:inclusion body"/>
    <property type="evidence" value="ECO:0000266"/>
    <property type="project" value="RGD"/>
</dbReference>
<dbReference type="GO" id="GO:0005874">
    <property type="term" value="C:microtubule"/>
    <property type="evidence" value="ECO:0000266"/>
    <property type="project" value="RGD"/>
</dbReference>
<dbReference type="GO" id="GO:0005875">
    <property type="term" value="C:microtubule associated complex"/>
    <property type="evidence" value="ECO:0000266"/>
    <property type="project" value="RGD"/>
</dbReference>
<dbReference type="GO" id="GO:0015630">
    <property type="term" value="C:microtubule cytoskeleton"/>
    <property type="evidence" value="ECO:0000266"/>
    <property type="project" value="RGD"/>
</dbReference>
<dbReference type="GO" id="GO:0043005">
    <property type="term" value="C:neuron projection"/>
    <property type="evidence" value="ECO:0000266"/>
    <property type="project" value="RGD"/>
</dbReference>
<dbReference type="GO" id="GO:0043025">
    <property type="term" value="C:neuronal cell body"/>
    <property type="evidence" value="ECO:0000266"/>
    <property type="project" value="RGD"/>
</dbReference>
<dbReference type="GO" id="GO:0005634">
    <property type="term" value="C:nucleus"/>
    <property type="evidence" value="ECO:0000266"/>
    <property type="project" value="RGD"/>
</dbReference>
<dbReference type="GO" id="GO:0043204">
    <property type="term" value="C:perikaryon"/>
    <property type="evidence" value="ECO:0000266"/>
    <property type="project" value="RGD"/>
</dbReference>
<dbReference type="GO" id="GO:0048471">
    <property type="term" value="C:perinuclear region of cytoplasm"/>
    <property type="evidence" value="ECO:0000266"/>
    <property type="project" value="RGD"/>
</dbReference>
<dbReference type="GO" id="GO:0032991">
    <property type="term" value="C:protein-containing complex"/>
    <property type="evidence" value="ECO:0000266"/>
    <property type="project" value="RGD"/>
</dbReference>
<dbReference type="GO" id="GO:0043014">
    <property type="term" value="F:alpha-tubulin binding"/>
    <property type="evidence" value="ECO:0000266"/>
    <property type="project" value="RGD"/>
</dbReference>
<dbReference type="GO" id="GO:0042030">
    <property type="term" value="F:ATPase inhibitor activity"/>
    <property type="evidence" value="ECO:0000266"/>
    <property type="project" value="RGD"/>
</dbReference>
<dbReference type="GO" id="GO:0008013">
    <property type="term" value="F:beta-catenin binding"/>
    <property type="evidence" value="ECO:0000266"/>
    <property type="project" value="RGD"/>
</dbReference>
<dbReference type="GO" id="GO:0048487">
    <property type="term" value="F:beta-tubulin binding"/>
    <property type="evidence" value="ECO:0000266"/>
    <property type="project" value="RGD"/>
</dbReference>
<dbReference type="GO" id="GO:0019213">
    <property type="term" value="F:deacetylase activity"/>
    <property type="evidence" value="ECO:0000314"/>
    <property type="project" value="RGD"/>
</dbReference>
<dbReference type="GO" id="GO:0070840">
    <property type="term" value="F:dynein complex binding"/>
    <property type="evidence" value="ECO:0000266"/>
    <property type="project" value="RGD"/>
</dbReference>
<dbReference type="GO" id="GO:0019899">
    <property type="term" value="F:enzyme binding"/>
    <property type="evidence" value="ECO:0000266"/>
    <property type="project" value="RGD"/>
</dbReference>
<dbReference type="GO" id="GO:0004407">
    <property type="term" value="F:histone deacetylase activity"/>
    <property type="evidence" value="ECO:0000266"/>
    <property type="project" value="RGD"/>
</dbReference>
<dbReference type="GO" id="GO:0042826">
    <property type="term" value="F:histone deacetylase binding"/>
    <property type="evidence" value="ECO:0000266"/>
    <property type="project" value="RGD"/>
</dbReference>
<dbReference type="GO" id="GO:0051879">
    <property type="term" value="F:Hsp90 protein binding"/>
    <property type="evidence" value="ECO:0000266"/>
    <property type="project" value="RGD"/>
</dbReference>
<dbReference type="GO" id="GO:0008017">
    <property type="term" value="F:microtubule binding"/>
    <property type="evidence" value="ECO:0000266"/>
    <property type="project" value="RGD"/>
</dbReference>
<dbReference type="GO" id="GO:0051787">
    <property type="term" value="F:misfolded protein binding"/>
    <property type="evidence" value="ECO:0000266"/>
    <property type="project" value="RGD"/>
</dbReference>
<dbReference type="GO" id="GO:0036479">
    <property type="term" value="F:peroxidase inhibitor activity"/>
    <property type="evidence" value="ECO:0000266"/>
    <property type="project" value="RGD"/>
</dbReference>
<dbReference type="GO" id="GO:0031593">
    <property type="term" value="F:polyubiquitin modification-dependent protein binding"/>
    <property type="evidence" value="ECO:0000266"/>
    <property type="project" value="RGD"/>
</dbReference>
<dbReference type="GO" id="GO:0033558">
    <property type="term" value="F:protein lysine deacetylase activity"/>
    <property type="evidence" value="ECO:0000266"/>
    <property type="project" value="RGD"/>
</dbReference>
<dbReference type="GO" id="GO:0000978">
    <property type="term" value="F:RNA polymerase II cis-regulatory region sequence-specific DNA binding"/>
    <property type="evidence" value="ECO:0000266"/>
    <property type="project" value="RGD"/>
</dbReference>
<dbReference type="GO" id="GO:0048156">
    <property type="term" value="F:tau protein binding"/>
    <property type="evidence" value="ECO:0000266"/>
    <property type="project" value="RGD"/>
</dbReference>
<dbReference type="GO" id="GO:0001222">
    <property type="term" value="F:transcription corepressor binding"/>
    <property type="evidence" value="ECO:0000266"/>
    <property type="project" value="RGD"/>
</dbReference>
<dbReference type="GO" id="GO:0042903">
    <property type="term" value="F:tubulin deacetylase activity"/>
    <property type="evidence" value="ECO:0000266"/>
    <property type="project" value="RGD"/>
</dbReference>
<dbReference type="GO" id="GO:0043130">
    <property type="term" value="F:ubiquitin binding"/>
    <property type="evidence" value="ECO:0000266"/>
    <property type="project" value="RGD"/>
</dbReference>
<dbReference type="GO" id="GO:0031625">
    <property type="term" value="F:ubiquitin protein ligase binding"/>
    <property type="evidence" value="ECO:0000266"/>
    <property type="project" value="RGD"/>
</dbReference>
<dbReference type="GO" id="GO:0008270">
    <property type="term" value="F:zinc ion binding"/>
    <property type="evidence" value="ECO:0007669"/>
    <property type="project" value="UniProtKB-KW"/>
</dbReference>
<dbReference type="GO" id="GO:0007015">
    <property type="term" value="P:actin filament organization"/>
    <property type="evidence" value="ECO:0000266"/>
    <property type="project" value="RGD"/>
</dbReference>
<dbReference type="GO" id="GO:0070842">
    <property type="term" value="P:aggresome assembly"/>
    <property type="evidence" value="ECO:0000266"/>
    <property type="project" value="RGD"/>
</dbReference>
<dbReference type="GO" id="GO:0019896">
    <property type="term" value="P:axonal transport of mitochondrion"/>
    <property type="evidence" value="ECO:0000315"/>
    <property type="project" value="RGD"/>
</dbReference>
<dbReference type="GO" id="GO:0070301">
    <property type="term" value="P:cellular response to hydrogen peroxide"/>
    <property type="evidence" value="ECO:0000266"/>
    <property type="project" value="RGD"/>
</dbReference>
<dbReference type="GO" id="GO:0071218">
    <property type="term" value="P:cellular response to misfolded protein"/>
    <property type="evidence" value="ECO:0000266"/>
    <property type="project" value="RGD"/>
</dbReference>
<dbReference type="GO" id="GO:0071374">
    <property type="term" value="P:cellular response to parathyroid hormone stimulus"/>
    <property type="evidence" value="ECO:0000270"/>
    <property type="project" value="RGD"/>
</dbReference>
<dbReference type="GO" id="GO:0035967">
    <property type="term" value="P:cellular response to topologically incorrect protein"/>
    <property type="evidence" value="ECO:0000266"/>
    <property type="project" value="RGD"/>
</dbReference>
<dbReference type="GO" id="GO:0061523">
    <property type="term" value="P:cilium disassembly"/>
    <property type="evidence" value="ECO:0000266"/>
    <property type="project" value="RGD"/>
</dbReference>
<dbReference type="GO" id="GO:0048668">
    <property type="term" value="P:collateral sprouting"/>
    <property type="evidence" value="ECO:0000266"/>
    <property type="project" value="RGD"/>
</dbReference>
<dbReference type="GO" id="GO:0060997">
    <property type="term" value="P:dendritic spine morphogenesis"/>
    <property type="evidence" value="ECO:0000266"/>
    <property type="project" value="RGD"/>
</dbReference>
<dbReference type="GO" id="GO:0007173">
    <property type="term" value="P:epidermal growth factor receptor signaling pathway"/>
    <property type="evidence" value="ECO:0000266"/>
    <property type="project" value="RGD"/>
</dbReference>
<dbReference type="GO" id="GO:0043131">
    <property type="term" value="P:erythrocyte enucleation"/>
    <property type="evidence" value="ECO:0000266"/>
    <property type="project" value="RGD"/>
</dbReference>
<dbReference type="GO" id="GO:0006886">
    <property type="term" value="P:intracellular protein transport"/>
    <property type="evidence" value="ECO:0000266"/>
    <property type="project" value="RGD"/>
</dbReference>
<dbReference type="GO" id="GO:0032418">
    <property type="term" value="P:lysosome localization"/>
    <property type="evidence" value="ECO:0000266"/>
    <property type="project" value="RGD"/>
</dbReference>
<dbReference type="GO" id="GO:0051646">
    <property type="term" value="P:mitochondrion localization"/>
    <property type="evidence" value="ECO:0000266"/>
    <property type="project" value="RGD"/>
</dbReference>
<dbReference type="GO" id="GO:1905336">
    <property type="term" value="P:negative regulation of aggrephagy"/>
    <property type="evidence" value="ECO:0000266"/>
    <property type="project" value="RGD"/>
</dbReference>
<dbReference type="GO" id="GO:0048843">
    <property type="term" value="P:negative regulation of axon extension involved in axon guidance"/>
    <property type="evidence" value="ECO:0000315"/>
    <property type="project" value="RGD"/>
</dbReference>
<dbReference type="GO" id="GO:0045814">
    <property type="term" value="P:negative regulation of gene expression, epigenetic"/>
    <property type="evidence" value="ECO:0000266"/>
    <property type="project" value="RGD"/>
</dbReference>
<dbReference type="GO" id="GO:0010727">
    <property type="term" value="P:negative regulation of hydrogen peroxide metabolic process"/>
    <property type="evidence" value="ECO:0000266"/>
    <property type="project" value="RGD"/>
</dbReference>
<dbReference type="GO" id="GO:0007026">
    <property type="term" value="P:negative regulation of microtubule depolymerization"/>
    <property type="evidence" value="ECO:0000266"/>
    <property type="project" value="RGD"/>
</dbReference>
<dbReference type="GO" id="GO:0010977">
    <property type="term" value="P:negative regulation of neuron projection development"/>
    <property type="evidence" value="ECO:0000315"/>
    <property type="project" value="RGD"/>
</dbReference>
<dbReference type="GO" id="GO:0031333">
    <property type="term" value="P:negative regulation of protein-containing complex assembly"/>
    <property type="evidence" value="ECO:0000266"/>
    <property type="project" value="RGD"/>
</dbReference>
<dbReference type="GO" id="GO:0043242">
    <property type="term" value="P:negative regulation of protein-containing complex disassembly"/>
    <property type="evidence" value="ECO:0000266"/>
    <property type="project" value="RGD"/>
</dbReference>
<dbReference type="GO" id="GO:0045861">
    <property type="term" value="P:negative regulation of proteolysis"/>
    <property type="evidence" value="ECO:0000266"/>
    <property type="project" value="RGD"/>
</dbReference>
<dbReference type="GO" id="GO:0030182">
    <property type="term" value="P:neuron differentiation"/>
    <property type="evidence" value="ECO:0000270"/>
    <property type="project" value="RGD"/>
</dbReference>
<dbReference type="GO" id="GO:0070845">
    <property type="term" value="P:polyubiquitinated misfolded protein transport"/>
    <property type="evidence" value="ECO:0000266"/>
    <property type="project" value="RGD"/>
</dbReference>
<dbReference type="GO" id="GO:1900409">
    <property type="term" value="P:positive regulation of cellular response to oxidative stress"/>
    <property type="evidence" value="ECO:0000315"/>
    <property type="project" value="RGD"/>
</dbReference>
<dbReference type="GO" id="GO:1904056">
    <property type="term" value="P:positive regulation of cholangiocyte proliferation"/>
    <property type="evidence" value="ECO:0000315"/>
    <property type="project" value="RGD"/>
</dbReference>
<dbReference type="GO" id="GO:0050775">
    <property type="term" value="P:positive regulation of dendrite morphogenesis"/>
    <property type="evidence" value="ECO:0000315"/>
    <property type="project" value="RGD"/>
</dbReference>
<dbReference type="GO" id="GO:0010634">
    <property type="term" value="P:positive regulation of epithelial cell migration"/>
    <property type="evidence" value="ECO:0000266"/>
    <property type="project" value="RGD"/>
</dbReference>
<dbReference type="GO" id="GO:0033148">
    <property type="term" value="P:positive regulation of intracellular estrogen receptor signaling pathway"/>
    <property type="evidence" value="ECO:0000266"/>
    <property type="project" value="RGD"/>
</dbReference>
<dbReference type="GO" id="GO:0032461">
    <property type="term" value="P:positive regulation of protein oligomerization"/>
    <property type="evidence" value="ECO:0000266"/>
    <property type="project" value="RGD"/>
</dbReference>
<dbReference type="GO" id="GO:0051968">
    <property type="term" value="P:positive regulation of synaptic transmission, glutamatergic"/>
    <property type="evidence" value="ECO:0000315"/>
    <property type="project" value="RGD"/>
</dbReference>
<dbReference type="GO" id="GO:1905091">
    <property type="term" value="P:positive regulation of type 2 mitophagy"/>
    <property type="evidence" value="ECO:0000266"/>
    <property type="project" value="RGD"/>
</dbReference>
<dbReference type="GO" id="GO:0031648">
    <property type="term" value="P:protein destabilization"/>
    <property type="evidence" value="ECO:0000266"/>
    <property type="project" value="RGD"/>
</dbReference>
<dbReference type="GO" id="GO:0000209">
    <property type="term" value="P:protein polyubiquitination"/>
    <property type="evidence" value="ECO:0000266"/>
    <property type="project" value="RGD"/>
</dbReference>
<dbReference type="GO" id="GO:0006515">
    <property type="term" value="P:protein quality control for misfolded or incompletely synthesized proteins"/>
    <property type="evidence" value="ECO:0000266"/>
    <property type="project" value="RGD"/>
</dbReference>
<dbReference type="GO" id="GO:0032984">
    <property type="term" value="P:protein-containing complex disassembly"/>
    <property type="evidence" value="ECO:0000266"/>
    <property type="project" value="RGD"/>
</dbReference>
<dbReference type="GO" id="GO:0070201">
    <property type="term" value="P:regulation of establishment of protein localization"/>
    <property type="evidence" value="ECO:0000266"/>
    <property type="project" value="RGD"/>
</dbReference>
<dbReference type="GO" id="GO:0045598">
    <property type="term" value="P:regulation of fat cell differentiation"/>
    <property type="evidence" value="ECO:0000266"/>
    <property type="project" value="RGD"/>
</dbReference>
<dbReference type="GO" id="GO:0016241">
    <property type="term" value="P:regulation of macroautophagy"/>
    <property type="evidence" value="ECO:0000266"/>
    <property type="project" value="RGD"/>
</dbReference>
<dbReference type="GO" id="GO:0070507">
    <property type="term" value="P:regulation of microtubule cytoskeleton organization"/>
    <property type="evidence" value="ECO:0000315"/>
    <property type="project" value="RGD"/>
</dbReference>
<dbReference type="GO" id="GO:0010821">
    <property type="term" value="P:regulation of mitochondrion organization"/>
    <property type="evidence" value="ECO:0000315"/>
    <property type="project" value="RGD"/>
</dbReference>
<dbReference type="GO" id="GO:0031647">
    <property type="term" value="P:regulation of protein stability"/>
    <property type="evidence" value="ECO:0000266"/>
    <property type="project" value="RGD"/>
</dbReference>
<dbReference type="GO" id="GO:0001975">
    <property type="term" value="P:response to amphetamine"/>
    <property type="evidence" value="ECO:0000270"/>
    <property type="project" value="RGD"/>
</dbReference>
<dbReference type="GO" id="GO:0051412">
    <property type="term" value="P:response to corticosterone"/>
    <property type="evidence" value="ECO:0000315"/>
    <property type="project" value="RGD"/>
</dbReference>
<dbReference type="GO" id="GO:0071548">
    <property type="term" value="P:response to dexamethasone"/>
    <property type="evidence" value="ECO:0000270"/>
    <property type="project" value="RGD"/>
</dbReference>
<dbReference type="GO" id="GO:0035902">
    <property type="term" value="P:response to immobilization stress"/>
    <property type="evidence" value="ECO:0000270"/>
    <property type="project" value="RGD"/>
</dbReference>
<dbReference type="GO" id="GO:0051788">
    <property type="term" value="P:response to misfolded protein"/>
    <property type="evidence" value="ECO:0000266"/>
    <property type="project" value="RGD"/>
</dbReference>
<dbReference type="GO" id="GO:0061734">
    <property type="term" value="P:type 2 mitophagy"/>
    <property type="evidence" value="ECO:0000266"/>
    <property type="project" value="RGD"/>
</dbReference>
<dbReference type="GO" id="GO:0006511">
    <property type="term" value="P:ubiquitin-dependent protein catabolic process"/>
    <property type="evidence" value="ECO:0000266"/>
    <property type="project" value="RGD"/>
</dbReference>
<dbReference type="GO" id="GO:0043162">
    <property type="term" value="P:ubiquitin-dependent protein catabolic process via the multivesicular body sorting pathway"/>
    <property type="evidence" value="ECO:0000266"/>
    <property type="project" value="RGD"/>
</dbReference>
<dbReference type="CDD" id="cd10003">
    <property type="entry name" value="HDAC6-dom2"/>
    <property type="match status" value="1"/>
</dbReference>
<dbReference type="FunFam" id="3.30.40.10:FF:000342">
    <property type="entry name" value="Histone deacetylase 6"/>
    <property type="match status" value="1"/>
</dbReference>
<dbReference type="FunFam" id="3.40.800.20:FF:000005">
    <property type="entry name" value="histone deacetylase 6"/>
    <property type="match status" value="1"/>
</dbReference>
<dbReference type="Gene3D" id="3.40.800.20">
    <property type="entry name" value="Histone deacetylase domain"/>
    <property type="match status" value="2"/>
</dbReference>
<dbReference type="Gene3D" id="3.30.40.10">
    <property type="entry name" value="Zinc/RING finger domain, C3HC4 (zinc finger)"/>
    <property type="match status" value="1"/>
</dbReference>
<dbReference type="InterPro" id="IPR050284">
    <property type="entry name" value="HDAC_PDAC"/>
</dbReference>
<dbReference type="InterPro" id="IPR000286">
    <property type="entry name" value="His_deacetylse"/>
</dbReference>
<dbReference type="InterPro" id="IPR023801">
    <property type="entry name" value="His_deacetylse_dom"/>
</dbReference>
<dbReference type="InterPro" id="IPR037138">
    <property type="entry name" value="His_deacetylse_dom_sf"/>
</dbReference>
<dbReference type="InterPro" id="IPR023696">
    <property type="entry name" value="Ureohydrolase_dom_sf"/>
</dbReference>
<dbReference type="InterPro" id="IPR013083">
    <property type="entry name" value="Znf_RING/FYVE/PHD"/>
</dbReference>
<dbReference type="InterPro" id="IPR001607">
    <property type="entry name" value="Znf_UBP"/>
</dbReference>
<dbReference type="PANTHER" id="PTHR10625:SF21">
    <property type="entry name" value="HISTONE DEACETYLASE 6"/>
    <property type="match status" value="1"/>
</dbReference>
<dbReference type="PANTHER" id="PTHR10625">
    <property type="entry name" value="HISTONE DEACETYLASE HDAC1-RELATED"/>
    <property type="match status" value="1"/>
</dbReference>
<dbReference type="Pfam" id="PF00850">
    <property type="entry name" value="Hist_deacetyl"/>
    <property type="match status" value="2"/>
</dbReference>
<dbReference type="Pfam" id="PF02148">
    <property type="entry name" value="zf-UBP"/>
    <property type="match status" value="1"/>
</dbReference>
<dbReference type="PRINTS" id="PR01270">
    <property type="entry name" value="HDASUPER"/>
</dbReference>
<dbReference type="SMART" id="SM00290">
    <property type="entry name" value="ZnF_UBP"/>
    <property type="match status" value="1"/>
</dbReference>
<dbReference type="SUPFAM" id="SSF52768">
    <property type="entry name" value="Arginase/deacetylase"/>
    <property type="match status" value="2"/>
</dbReference>
<dbReference type="SUPFAM" id="SSF57850">
    <property type="entry name" value="RING/U-box"/>
    <property type="match status" value="1"/>
</dbReference>
<dbReference type="PROSITE" id="PS50271">
    <property type="entry name" value="ZF_UBP"/>
    <property type="match status" value="1"/>
</dbReference>
<gene>
    <name evidence="8" type="primary">Hdac6</name>
</gene>
<name>HDAC6_RAT</name>
<proteinExistence type="inferred from homology"/>
<sequence length="1183" mass="129064">MTSTGQDSSTRQRKSRHNPQSPLQDSSATLKRGGKKGAVPHSSPNLAEVKKKGKMKKLSQPAEEDLIVGLQGLDLNSETRVPVGTGLVFDEQLNDFHCLWDDSFPENPERLHAIKEQLILEGLLGRCVSFQARFAEKEELMLVHSLEYIDLMETTQYMNEGELRVLAGTYDSVYLHPNSYSCACLATGSVLRLVDAVMGAEIRNGMAVIRPPGHHAQRSLMDGYCMFNHLAVAARYAQKKHRIQRILIVDWDVHHGQGTQFIFDQDPSVLYFSIHRYEHGRFWPHLKASNWSTTGFGQGQGYTINVPWNQVSFCSHKLSLACFPRGSREMTDYYIAFLCLQVGMRDADYIAAFLHILLPVAFEFQPQLVLVAAGFDALHGDPKGEMSATPAGFAHLTHFLMGLAGGKLILSLEGGYNLHALAKGVSGSLHTLLGDPCPMLESPVAPCASAQTSISCTLEALEPFWEVLERSVEPQDEDEVEGDMLEDEEEEGHWEATALPMDTWPLLQNRTGLVYDERMMSHCNLWDNHHPETPQRILRIMCHLEEVGLAARCLILPARPALDSELLTCHSAEYVERLRATEKMKTRDLHREGANFESIYICPSTFACAQLATGAACRLVEAVLSGEVLNGIAIVRPPGHHAEPDAACGFCFFNSVAVAARHAQVIAGRALRILIVDWDVHHGNGTQHIFEEDPSVLYVSLHRYDRGTFFPMGDEGASSQVGRAAGTGFTVNVPWNGPRMGDADYLATWHRLVLPIAYEFNPELVLISAGFDAAQGDPLGGCQVTPEGYAHLTHLLMGLAGGRIILILEGGYNLTSISESMAACTHSLLGDPPPQLTSLRPPQSGALASISEVIQVHRKYWRSLRLMKMEDKEERSSSRLVIKKLPQSASPVSAKGMTTPKGKVLEAGMRKPTAALPTKESTLGQAKAKTAKALLAQGQSSEQAAKGTTLDLATSKDTVGGATTDQCASVAATENSANQTTSGEEASGETESFGTSPSSNASKQTTGASPLHGAAAQQSPELGLSSTLELSSEAQEVQESEEGLLGEAAGGQDMNSLMLTQGFGDFNTQDVFYAVTPLSWCPHLMAVCPIPAAGLDVSQPCKTCGSVQENWVCLTCYQVYCSRYVNAHMVCHHEASEHPLVLSCVDLSTWCYLCQAYVHHEDLQDVKNAAHQNKFGEGMPHLQ</sequence>
<accession>A0A8I6GM68</accession>
<reference evidence="7" key="1">
    <citation type="journal article" date="2004" name="Nature">
        <title>Genome sequence of the Brown Norway rat yields insights into mammalian evolution.</title>
        <authorList>
            <person name="Gibbs R.A."/>
            <person name="Weinstock G.M."/>
            <person name="Metzker M.L."/>
            <person name="Muzny D.M."/>
            <person name="Sodergren E.J."/>
            <person name="Scherer S."/>
            <person name="Scott G."/>
            <person name="Steffen D."/>
            <person name="Worley K.C."/>
            <person name="Burch P.E."/>
            <person name="Okwuonu G."/>
            <person name="Hines S."/>
            <person name="Lewis L."/>
            <person name="Deramo C."/>
            <person name="Delgado O."/>
            <person name="Dugan-Rocha S."/>
            <person name="Miner G."/>
            <person name="Morgan M."/>
            <person name="Hawes A."/>
            <person name="Gill R."/>
            <person name="Holt R.A."/>
            <person name="Adams M.D."/>
            <person name="Amanatides P.G."/>
            <person name="Baden-Tillson H."/>
            <person name="Barnstead M."/>
            <person name="Chin S."/>
            <person name="Evans C.A."/>
            <person name="Ferriera S."/>
            <person name="Fosler C."/>
            <person name="Glodek A."/>
            <person name="Gu Z."/>
            <person name="Jennings D."/>
            <person name="Kraft C.L."/>
            <person name="Nguyen T."/>
            <person name="Pfannkoch C.M."/>
            <person name="Sitter C."/>
            <person name="Sutton G.G."/>
            <person name="Venter J.C."/>
            <person name="Woodage T."/>
            <person name="Smith D."/>
            <person name="Lee H.-M."/>
            <person name="Gustafson E."/>
            <person name="Cahill P."/>
            <person name="Kana A."/>
            <person name="Doucette-Stamm L."/>
            <person name="Weinstock K."/>
            <person name="Fechtel K."/>
            <person name="Weiss R.B."/>
            <person name="Dunn D.M."/>
            <person name="Green E.D."/>
            <person name="Blakesley R.W."/>
            <person name="Bouffard G.G."/>
            <person name="De Jong P.J."/>
            <person name="Osoegawa K."/>
            <person name="Zhu B."/>
            <person name="Marra M."/>
            <person name="Schein J."/>
            <person name="Bosdet I."/>
            <person name="Fjell C."/>
            <person name="Jones S."/>
            <person name="Krzywinski M."/>
            <person name="Mathewson C."/>
            <person name="Siddiqui A."/>
            <person name="Wye N."/>
            <person name="McPherson J."/>
            <person name="Zhao S."/>
            <person name="Fraser C.M."/>
            <person name="Shetty J."/>
            <person name="Shatsman S."/>
            <person name="Geer K."/>
            <person name="Chen Y."/>
            <person name="Abramzon S."/>
            <person name="Nierman W.C."/>
            <person name="Havlak P.H."/>
            <person name="Chen R."/>
            <person name="Durbin K.J."/>
            <person name="Egan A."/>
            <person name="Ren Y."/>
            <person name="Song X.-Z."/>
            <person name="Li B."/>
            <person name="Liu Y."/>
            <person name="Qin X."/>
            <person name="Cawley S."/>
            <person name="Cooney A.J."/>
            <person name="D'Souza L.M."/>
            <person name="Martin K."/>
            <person name="Wu J.Q."/>
            <person name="Gonzalez-Garay M.L."/>
            <person name="Jackson A.R."/>
            <person name="Kalafus K.J."/>
            <person name="McLeod M.P."/>
            <person name="Milosavljevic A."/>
            <person name="Virk D."/>
            <person name="Volkov A."/>
            <person name="Wheeler D.A."/>
            <person name="Zhang Z."/>
            <person name="Bailey J.A."/>
            <person name="Eichler E.E."/>
            <person name="Tuzun E."/>
            <person name="Birney E."/>
            <person name="Mongin E."/>
            <person name="Ureta-Vidal A."/>
            <person name="Woodwark C."/>
            <person name="Zdobnov E."/>
            <person name="Bork P."/>
            <person name="Suyama M."/>
            <person name="Torrents D."/>
            <person name="Alexandersson M."/>
            <person name="Trask B.J."/>
            <person name="Young J.M."/>
            <person name="Huang H."/>
            <person name="Wang H."/>
            <person name="Xing H."/>
            <person name="Daniels S."/>
            <person name="Gietzen D."/>
            <person name="Schmidt J."/>
            <person name="Stevens K."/>
            <person name="Vitt U."/>
            <person name="Wingrove J."/>
            <person name="Camara F."/>
            <person name="Mar Alba M."/>
            <person name="Abril J.F."/>
            <person name="Guigo R."/>
            <person name="Smit A."/>
            <person name="Dubchak I."/>
            <person name="Rubin E.M."/>
            <person name="Couronne O."/>
            <person name="Poliakov A."/>
            <person name="Huebner N."/>
            <person name="Ganten D."/>
            <person name="Goesele C."/>
            <person name="Hummel O."/>
            <person name="Kreitler T."/>
            <person name="Lee Y.-A."/>
            <person name="Monti J."/>
            <person name="Schulz H."/>
            <person name="Zimdahl H."/>
            <person name="Himmelbauer H."/>
            <person name="Lehrach H."/>
            <person name="Jacob H.J."/>
            <person name="Bromberg S."/>
            <person name="Gullings-Handley J."/>
            <person name="Jensen-Seaman M.I."/>
            <person name="Kwitek A.E."/>
            <person name="Lazar J."/>
            <person name="Pasko D."/>
            <person name="Tonellato P.J."/>
            <person name="Twigger S."/>
            <person name="Ponting C.P."/>
            <person name="Duarte J.M."/>
            <person name="Rice S."/>
            <person name="Goodstadt L."/>
            <person name="Beatson S.A."/>
            <person name="Emes R.D."/>
            <person name="Winter E.E."/>
            <person name="Webber C."/>
            <person name="Brandt P."/>
            <person name="Nyakatura G."/>
            <person name="Adetobi M."/>
            <person name="Chiaromonte F."/>
            <person name="Elnitski L."/>
            <person name="Eswara P."/>
            <person name="Hardison R.C."/>
            <person name="Hou M."/>
            <person name="Kolbe D."/>
            <person name="Makova K."/>
            <person name="Miller W."/>
            <person name="Nekrutenko A."/>
            <person name="Riemer C."/>
            <person name="Schwartz S."/>
            <person name="Taylor J."/>
            <person name="Yang S."/>
            <person name="Zhang Y."/>
            <person name="Lindpaintner K."/>
            <person name="Andrews T.D."/>
            <person name="Caccamo M."/>
            <person name="Clamp M."/>
            <person name="Clarke L."/>
            <person name="Curwen V."/>
            <person name="Durbin R.M."/>
            <person name="Eyras E."/>
            <person name="Searle S.M."/>
            <person name="Cooper G.M."/>
            <person name="Batzoglou S."/>
            <person name="Brudno M."/>
            <person name="Sidow A."/>
            <person name="Stone E.A."/>
            <person name="Payseur B.A."/>
            <person name="Bourque G."/>
            <person name="Lopez-Otin C."/>
            <person name="Puente X.S."/>
            <person name="Chakrabarti K."/>
            <person name="Chatterji S."/>
            <person name="Dewey C."/>
            <person name="Pachter L."/>
            <person name="Bray N."/>
            <person name="Yap V.B."/>
            <person name="Caspi A."/>
            <person name="Tesler G."/>
            <person name="Pevzner P.A."/>
            <person name="Haussler D."/>
            <person name="Roskin K.M."/>
            <person name="Baertsch R."/>
            <person name="Clawson H."/>
            <person name="Furey T.S."/>
            <person name="Hinrichs A.S."/>
            <person name="Karolchik D."/>
            <person name="Kent W.J."/>
            <person name="Rosenbloom K.R."/>
            <person name="Trumbower H."/>
            <person name="Weirauch M."/>
            <person name="Cooper D.N."/>
            <person name="Stenson P.D."/>
            <person name="Ma B."/>
            <person name="Brent M."/>
            <person name="Arumugam M."/>
            <person name="Shteynberg D."/>
            <person name="Copley R.R."/>
            <person name="Taylor M.S."/>
            <person name="Riethman H."/>
            <person name="Mudunuri U."/>
            <person name="Peterson J."/>
            <person name="Guyer M."/>
            <person name="Felsenfeld A."/>
            <person name="Old S."/>
            <person name="Mockrin S."/>
            <person name="Collins F.S."/>
        </authorList>
    </citation>
    <scope>NUCLEOTIDE SEQUENCE [LARGE SCALE GENOMIC DNA]</scope>
    <source>
        <strain evidence="7">Brown Norway</strain>
    </source>
</reference>
<reference evidence="6" key="2">
    <citation type="journal article" date="2019" name="J. Cell Biol.">
        <title>Deacetylation of Miro1 by HDAC6 blocks mitochondrial transport and mediates axon growth inhibition.</title>
        <authorList>
            <person name="Kalinski A.L."/>
            <person name="Kar A.N."/>
            <person name="Craver J."/>
            <person name="Tosolini A.P."/>
            <person name="Sleigh J.N."/>
            <person name="Lee S.J."/>
            <person name="Hawthorne A."/>
            <person name="Brito-Vargas P."/>
            <person name="Miller-Randolph S."/>
            <person name="Passino R."/>
            <person name="Shi L."/>
            <person name="Wong V.S.C."/>
            <person name="Picci C."/>
            <person name="Smith D.S."/>
            <person name="Willis D.E."/>
            <person name="Havton L.A."/>
            <person name="Schiavo G."/>
            <person name="Giger R.J."/>
            <person name="Langley B."/>
            <person name="Twiss J.L."/>
        </authorList>
    </citation>
    <scope>FUNCTION</scope>
</reference>
<organism evidence="7">
    <name type="scientific">Rattus norvegicus</name>
    <name type="common">Rat</name>
    <dbReference type="NCBI Taxonomy" id="10116"/>
    <lineage>
        <taxon>Eukaryota</taxon>
        <taxon>Metazoa</taxon>
        <taxon>Chordata</taxon>
        <taxon>Craniata</taxon>
        <taxon>Vertebrata</taxon>
        <taxon>Euteleostomi</taxon>
        <taxon>Mammalia</taxon>
        <taxon>Eutheria</taxon>
        <taxon>Euarchontoglires</taxon>
        <taxon>Glires</taxon>
        <taxon>Rodentia</taxon>
        <taxon>Myomorpha</taxon>
        <taxon>Muroidea</taxon>
        <taxon>Muridae</taxon>
        <taxon>Murinae</taxon>
        <taxon>Rattus</taxon>
    </lineage>
</organism>
<protein>
    <recommendedName>
        <fullName evidence="6">Protein deacetylase HDAC6</fullName>
        <ecNumber evidence="1">3.5.1.-</ecNumber>
    </recommendedName>
    <alternativeName>
        <fullName evidence="6">E3 ubiquitin-protein ligase HDAC6</fullName>
        <ecNumber evidence="1">2.3.2.-</ecNumber>
    </alternativeName>
    <alternativeName>
        <fullName evidence="6">Tubulin-lysine deacetylase HDAC6</fullName>
        <ecNumber evidence="1">3.5.1.-</ecNumber>
    </alternativeName>
</protein>
<keyword id="KW-0009">Actin-binding</keyword>
<keyword id="KW-0072">Autophagy</keyword>
<keyword id="KW-0966">Cell projection</keyword>
<keyword id="KW-0156">Chromatin regulator</keyword>
<keyword id="KW-0963">Cytoplasm</keyword>
<keyword id="KW-0206">Cytoskeleton</keyword>
<keyword id="KW-0378">Hydrolase</keyword>
<keyword id="KW-0479">Metal-binding</keyword>
<keyword id="KW-0488">Methylation</keyword>
<keyword id="KW-0539">Nucleus</keyword>
<keyword id="KW-0597">Phosphoprotein</keyword>
<keyword id="KW-1185">Reference proteome</keyword>
<keyword id="KW-0677">Repeat</keyword>
<keyword id="KW-0678">Repressor</keyword>
<keyword id="KW-0804">Transcription</keyword>
<keyword id="KW-0805">Transcription regulation</keyword>
<keyword id="KW-0808">Transferase</keyword>
<keyword id="KW-0832">Ubl conjugation</keyword>
<keyword id="KW-0833">Ubl conjugation pathway</keyword>
<keyword id="KW-0862">Zinc</keyword>
<keyword id="KW-0863">Zinc-finger</keyword>